<reference key="1">
    <citation type="journal article" date="2000" name="Science">
        <title>The genome sequence of Drosophila melanogaster.</title>
        <authorList>
            <person name="Adams M.D."/>
            <person name="Celniker S.E."/>
            <person name="Holt R.A."/>
            <person name="Evans C.A."/>
            <person name="Gocayne J.D."/>
            <person name="Amanatides P.G."/>
            <person name="Scherer S.E."/>
            <person name="Li P.W."/>
            <person name="Hoskins R.A."/>
            <person name="Galle R.F."/>
            <person name="George R.A."/>
            <person name="Lewis S.E."/>
            <person name="Richards S."/>
            <person name="Ashburner M."/>
            <person name="Henderson S.N."/>
            <person name="Sutton G.G."/>
            <person name="Wortman J.R."/>
            <person name="Yandell M.D."/>
            <person name="Zhang Q."/>
            <person name="Chen L.X."/>
            <person name="Brandon R.C."/>
            <person name="Rogers Y.-H.C."/>
            <person name="Blazej R.G."/>
            <person name="Champe M."/>
            <person name="Pfeiffer B.D."/>
            <person name="Wan K.H."/>
            <person name="Doyle C."/>
            <person name="Baxter E.G."/>
            <person name="Helt G."/>
            <person name="Nelson C.R."/>
            <person name="Miklos G.L.G."/>
            <person name="Abril J.F."/>
            <person name="Agbayani A."/>
            <person name="An H.-J."/>
            <person name="Andrews-Pfannkoch C."/>
            <person name="Baldwin D."/>
            <person name="Ballew R.M."/>
            <person name="Basu A."/>
            <person name="Baxendale J."/>
            <person name="Bayraktaroglu L."/>
            <person name="Beasley E.M."/>
            <person name="Beeson K.Y."/>
            <person name="Benos P.V."/>
            <person name="Berman B.P."/>
            <person name="Bhandari D."/>
            <person name="Bolshakov S."/>
            <person name="Borkova D."/>
            <person name="Botchan M.R."/>
            <person name="Bouck J."/>
            <person name="Brokstein P."/>
            <person name="Brottier P."/>
            <person name="Burtis K.C."/>
            <person name="Busam D.A."/>
            <person name="Butler H."/>
            <person name="Cadieu E."/>
            <person name="Center A."/>
            <person name="Chandra I."/>
            <person name="Cherry J.M."/>
            <person name="Cawley S."/>
            <person name="Dahlke C."/>
            <person name="Davenport L.B."/>
            <person name="Davies P."/>
            <person name="de Pablos B."/>
            <person name="Delcher A."/>
            <person name="Deng Z."/>
            <person name="Mays A.D."/>
            <person name="Dew I."/>
            <person name="Dietz S.M."/>
            <person name="Dodson K."/>
            <person name="Doup L.E."/>
            <person name="Downes M."/>
            <person name="Dugan-Rocha S."/>
            <person name="Dunkov B.C."/>
            <person name="Dunn P."/>
            <person name="Durbin K.J."/>
            <person name="Evangelista C.C."/>
            <person name="Ferraz C."/>
            <person name="Ferriera S."/>
            <person name="Fleischmann W."/>
            <person name="Fosler C."/>
            <person name="Gabrielian A.E."/>
            <person name="Garg N.S."/>
            <person name="Gelbart W.M."/>
            <person name="Glasser K."/>
            <person name="Glodek A."/>
            <person name="Gong F."/>
            <person name="Gorrell J.H."/>
            <person name="Gu Z."/>
            <person name="Guan P."/>
            <person name="Harris M."/>
            <person name="Harris N.L."/>
            <person name="Harvey D.A."/>
            <person name="Heiman T.J."/>
            <person name="Hernandez J.R."/>
            <person name="Houck J."/>
            <person name="Hostin D."/>
            <person name="Houston K.A."/>
            <person name="Howland T.J."/>
            <person name="Wei M.-H."/>
            <person name="Ibegwam C."/>
            <person name="Jalali M."/>
            <person name="Kalush F."/>
            <person name="Karpen G.H."/>
            <person name="Ke Z."/>
            <person name="Kennison J.A."/>
            <person name="Ketchum K.A."/>
            <person name="Kimmel B.E."/>
            <person name="Kodira C.D."/>
            <person name="Kraft C.L."/>
            <person name="Kravitz S."/>
            <person name="Kulp D."/>
            <person name="Lai Z."/>
            <person name="Lasko P."/>
            <person name="Lei Y."/>
            <person name="Levitsky A.A."/>
            <person name="Li J.H."/>
            <person name="Li Z."/>
            <person name="Liang Y."/>
            <person name="Lin X."/>
            <person name="Liu X."/>
            <person name="Mattei B."/>
            <person name="McIntosh T.C."/>
            <person name="McLeod M.P."/>
            <person name="McPherson D."/>
            <person name="Merkulov G."/>
            <person name="Milshina N.V."/>
            <person name="Mobarry C."/>
            <person name="Morris J."/>
            <person name="Moshrefi A."/>
            <person name="Mount S.M."/>
            <person name="Moy M."/>
            <person name="Murphy B."/>
            <person name="Murphy L."/>
            <person name="Muzny D.M."/>
            <person name="Nelson D.L."/>
            <person name="Nelson D.R."/>
            <person name="Nelson K.A."/>
            <person name="Nixon K."/>
            <person name="Nusskern D.R."/>
            <person name="Pacleb J.M."/>
            <person name="Palazzolo M."/>
            <person name="Pittman G.S."/>
            <person name="Pan S."/>
            <person name="Pollard J."/>
            <person name="Puri V."/>
            <person name="Reese M.G."/>
            <person name="Reinert K."/>
            <person name="Remington K."/>
            <person name="Saunders R.D.C."/>
            <person name="Scheeler F."/>
            <person name="Shen H."/>
            <person name="Shue B.C."/>
            <person name="Siden-Kiamos I."/>
            <person name="Simpson M."/>
            <person name="Skupski M.P."/>
            <person name="Smith T.J."/>
            <person name="Spier E."/>
            <person name="Spradling A.C."/>
            <person name="Stapleton M."/>
            <person name="Strong R."/>
            <person name="Sun E."/>
            <person name="Svirskas R."/>
            <person name="Tector C."/>
            <person name="Turner R."/>
            <person name="Venter E."/>
            <person name="Wang A.H."/>
            <person name="Wang X."/>
            <person name="Wang Z.-Y."/>
            <person name="Wassarman D.A."/>
            <person name="Weinstock G.M."/>
            <person name="Weissenbach J."/>
            <person name="Williams S.M."/>
            <person name="Woodage T."/>
            <person name="Worley K.C."/>
            <person name="Wu D."/>
            <person name="Yang S."/>
            <person name="Yao Q.A."/>
            <person name="Ye J."/>
            <person name="Yeh R.-F."/>
            <person name="Zaveri J.S."/>
            <person name="Zhan M."/>
            <person name="Zhang G."/>
            <person name="Zhao Q."/>
            <person name="Zheng L."/>
            <person name="Zheng X.H."/>
            <person name="Zhong F.N."/>
            <person name="Zhong W."/>
            <person name="Zhou X."/>
            <person name="Zhu S.C."/>
            <person name="Zhu X."/>
            <person name="Smith H.O."/>
            <person name="Gibbs R.A."/>
            <person name="Myers E.W."/>
            <person name="Rubin G.M."/>
            <person name="Venter J.C."/>
        </authorList>
    </citation>
    <scope>NUCLEOTIDE SEQUENCE [LARGE SCALE GENOMIC DNA]</scope>
    <source>
        <strain>Berkeley</strain>
    </source>
</reference>
<reference key="2">
    <citation type="journal article" date="2002" name="Genome Biol.">
        <title>Annotation of the Drosophila melanogaster euchromatic genome: a systematic review.</title>
        <authorList>
            <person name="Misra S."/>
            <person name="Crosby M.A."/>
            <person name="Mungall C.J."/>
            <person name="Matthews B.B."/>
            <person name="Campbell K.S."/>
            <person name="Hradecky P."/>
            <person name="Huang Y."/>
            <person name="Kaminker J.S."/>
            <person name="Millburn G.H."/>
            <person name="Prochnik S.E."/>
            <person name="Smith C.D."/>
            <person name="Tupy J.L."/>
            <person name="Whitfield E.J."/>
            <person name="Bayraktaroglu L."/>
            <person name="Berman B.P."/>
            <person name="Bettencourt B.R."/>
            <person name="Celniker S.E."/>
            <person name="de Grey A.D.N.J."/>
            <person name="Drysdale R.A."/>
            <person name="Harris N.L."/>
            <person name="Richter J."/>
            <person name="Russo S."/>
            <person name="Schroeder A.J."/>
            <person name="Shu S.Q."/>
            <person name="Stapleton M."/>
            <person name="Yamada C."/>
            <person name="Ashburner M."/>
            <person name="Gelbart W.M."/>
            <person name="Rubin G.M."/>
            <person name="Lewis S.E."/>
        </authorList>
    </citation>
    <scope>GENOME REANNOTATION</scope>
    <source>
        <strain>Berkeley</strain>
    </source>
</reference>
<reference key="3">
    <citation type="journal article" date="2000" name="Science">
        <title>A Drosophila complementary DNA resource.</title>
        <authorList>
            <person name="Rubin G.M."/>
            <person name="Hong L."/>
            <person name="Brokstein P."/>
            <person name="Evans-Holm M."/>
            <person name="Frise E."/>
            <person name="Stapleton M."/>
            <person name="Harvey D.A."/>
        </authorList>
    </citation>
    <scope>NUCLEOTIDE SEQUENCE [LARGE SCALE MRNA]</scope>
    <source>
        <strain>Berkeley</strain>
        <tissue>Head</tissue>
    </source>
</reference>
<reference key="4">
    <citation type="journal article" date="2004" name="Genetics">
        <title>Evolutionary expressed sequence tag analysis of Drosophila female reproductive tracts identifies genes subjected to positive selection.</title>
        <authorList>
            <person name="Swanson W.J."/>
            <person name="Wong A."/>
            <person name="Wolfner M.F."/>
            <person name="Aquadro C.F."/>
        </authorList>
    </citation>
    <scope>NUCLEOTIDE SEQUENCE [MRNA] OF 10-523</scope>
</reference>
<accession>Q9Y115</accession>
<accession>Q0KHR6</accession>
<accession>Q6BD02</accession>
<organism>
    <name type="scientific">Drosophila melanogaster</name>
    <name type="common">Fruit fly</name>
    <dbReference type="NCBI Taxonomy" id="7227"/>
    <lineage>
        <taxon>Eukaryota</taxon>
        <taxon>Metazoa</taxon>
        <taxon>Ecdysozoa</taxon>
        <taxon>Arthropoda</taxon>
        <taxon>Hexapoda</taxon>
        <taxon>Insecta</taxon>
        <taxon>Pterygota</taxon>
        <taxon>Neoptera</taxon>
        <taxon>Endopterygota</taxon>
        <taxon>Diptera</taxon>
        <taxon>Brachycera</taxon>
        <taxon>Muscomorpha</taxon>
        <taxon>Ephydroidea</taxon>
        <taxon>Drosophilidae</taxon>
        <taxon>Drosophila</taxon>
        <taxon>Sophophora</taxon>
    </lineage>
</organism>
<dbReference type="EMBL" id="AE014298">
    <property type="protein sequence ID" value="AAN09429.1"/>
    <property type="molecule type" value="Genomic_DNA"/>
</dbReference>
<dbReference type="EMBL" id="AF145657">
    <property type="protein sequence ID" value="AAD38632.1"/>
    <property type="molecule type" value="mRNA"/>
</dbReference>
<dbReference type="EMBL" id="AY665384">
    <property type="protein sequence ID" value="AAT76551.1"/>
    <property type="molecule type" value="mRNA"/>
</dbReference>
<dbReference type="RefSeq" id="NP_573179.1">
    <property type="nucleotide sequence ID" value="NM_132951.3"/>
</dbReference>
<dbReference type="RefSeq" id="NP_728035.1">
    <property type="nucleotide sequence ID" value="NM_167552.2"/>
</dbReference>
<dbReference type="SMR" id="Q9Y115"/>
<dbReference type="FunCoup" id="Q9Y115">
    <property type="interactions" value="42"/>
</dbReference>
<dbReference type="STRING" id="7227.FBpp0074118"/>
<dbReference type="GlyGen" id="Q9Y115">
    <property type="glycosylation" value="2 sites"/>
</dbReference>
<dbReference type="PaxDb" id="7227-FBpp0074118"/>
<dbReference type="DNASU" id="32682"/>
<dbReference type="EnsemblMetazoa" id="FBtr0074344">
    <property type="protein sequence ID" value="FBpp0074118"/>
    <property type="gene ID" value="FBgn0027556"/>
</dbReference>
<dbReference type="EnsemblMetazoa" id="FBtr0074345">
    <property type="protein sequence ID" value="FBpp0074119"/>
    <property type="gene ID" value="FBgn0027556"/>
</dbReference>
<dbReference type="GeneID" id="32682"/>
<dbReference type="KEGG" id="dme:Dmel_CG4928"/>
<dbReference type="UCSC" id="CG4928-RA">
    <property type="organism name" value="d. melanogaster"/>
</dbReference>
<dbReference type="AGR" id="FB:FBgn0027556"/>
<dbReference type="FlyBase" id="FBgn0027556">
    <property type="gene designation" value="CG4928"/>
</dbReference>
<dbReference type="VEuPathDB" id="VectorBase:FBgn0027556"/>
<dbReference type="eggNOG" id="KOG3097">
    <property type="taxonomic scope" value="Eukaryota"/>
</dbReference>
<dbReference type="GeneTree" id="ENSGT00530000063359"/>
<dbReference type="HOGENOM" id="CLU_025356_1_0_1"/>
<dbReference type="InParanoid" id="Q9Y115"/>
<dbReference type="OMA" id="NTACIIA"/>
<dbReference type="OrthoDB" id="78663at2759"/>
<dbReference type="PhylomeDB" id="Q9Y115"/>
<dbReference type="BioGRID-ORCS" id="32682">
    <property type="hits" value="0 hits in 3 CRISPR screens"/>
</dbReference>
<dbReference type="ChiTaRS" id="CG4928">
    <property type="organism name" value="fly"/>
</dbReference>
<dbReference type="GenomeRNAi" id="32682"/>
<dbReference type="PRO" id="PR:Q9Y115"/>
<dbReference type="Proteomes" id="UP000000803">
    <property type="component" value="Chromosome X"/>
</dbReference>
<dbReference type="Bgee" id="FBgn0027556">
    <property type="expression patterns" value="Expressed in epithelial cell in antenna and 191 other cell types or tissues"/>
</dbReference>
<dbReference type="ExpressionAtlas" id="Q9Y115">
    <property type="expression patterns" value="baseline and differential"/>
</dbReference>
<dbReference type="GO" id="GO:0016020">
    <property type="term" value="C:membrane"/>
    <property type="evidence" value="ECO:0000255"/>
    <property type="project" value="FlyBase"/>
</dbReference>
<dbReference type="GO" id="GO:0005886">
    <property type="term" value="C:plasma membrane"/>
    <property type="evidence" value="ECO:0000250"/>
    <property type="project" value="UniProtKB"/>
</dbReference>
<dbReference type="GO" id="GO:0055120">
    <property type="term" value="C:striated muscle dense body"/>
    <property type="evidence" value="ECO:0000318"/>
    <property type="project" value="GO_Central"/>
</dbReference>
<dbReference type="GO" id="GO:0015459">
    <property type="term" value="F:potassium channel regulator activity"/>
    <property type="evidence" value="ECO:0000318"/>
    <property type="project" value="GO_Central"/>
</dbReference>
<dbReference type="GO" id="GO:0022857">
    <property type="term" value="F:transmembrane transporter activity"/>
    <property type="evidence" value="ECO:0000255"/>
    <property type="project" value="FlyBase"/>
</dbReference>
<dbReference type="GO" id="GO:0098771">
    <property type="term" value="P:inorganic ion homeostasis"/>
    <property type="evidence" value="ECO:0000315"/>
    <property type="project" value="FlyBase"/>
</dbReference>
<dbReference type="GO" id="GO:0006937">
    <property type="term" value="P:regulation of muscle contraction"/>
    <property type="evidence" value="ECO:0000318"/>
    <property type="project" value="GO_Central"/>
</dbReference>
<dbReference type="GO" id="GO:0043266">
    <property type="term" value="P:regulation of potassium ion transport"/>
    <property type="evidence" value="ECO:0000318"/>
    <property type="project" value="GO_Central"/>
</dbReference>
<dbReference type="GO" id="GO:0003014">
    <property type="term" value="P:renal system process"/>
    <property type="evidence" value="ECO:0000315"/>
    <property type="project" value="FlyBase"/>
</dbReference>
<dbReference type="GO" id="GO:0055085">
    <property type="term" value="P:transmembrane transport"/>
    <property type="evidence" value="ECO:0000255"/>
    <property type="project" value="FlyBase"/>
</dbReference>
<dbReference type="CDD" id="cd17406">
    <property type="entry name" value="MFS_unc93A_like"/>
    <property type="match status" value="1"/>
</dbReference>
<dbReference type="FunFam" id="1.20.1250.20:FF:000290">
    <property type="entry name" value="Unc-93 homolog A"/>
    <property type="match status" value="1"/>
</dbReference>
<dbReference type="Gene3D" id="1.20.1250.20">
    <property type="entry name" value="MFS general substrate transporter like domains"/>
    <property type="match status" value="1"/>
</dbReference>
<dbReference type="InterPro" id="IPR010291">
    <property type="entry name" value="Ion_channel_UNC-93"/>
</dbReference>
<dbReference type="InterPro" id="IPR036259">
    <property type="entry name" value="MFS_trans_sf"/>
</dbReference>
<dbReference type="InterPro" id="IPR051951">
    <property type="entry name" value="UNC-93_regulatory"/>
</dbReference>
<dbReference type="PANTHER" id="PTHR19444:SF13">
    <property type="entry name" value="PROTEIN UNC-93 HOMOLOG A"/>
    <property type="match status" value="1"/>
</dbReference>
<dbReference type="PANTHER" id="PTHR19444">
    <property type="entry name" value="UNC-93 RELATED"/>
    <property type="match status" value="1"/>
</dbReference>
<dbReference type="Pfam" id="PF05978">
    <property type="entry name" value="UNC-93"/>
    <property type="match status" value="1"/>
</dbReference>
<dbReference type="SUPFAM" id="SSF103473">
    <property type="entry name" value="MFS general substrate transporter"/>
    <property type="match status" value="1"/>
</dbReference>
<feature type="chain" id="PRO_0000190042" description="UNC93-like protein">
    <location>
        <begin position="1"/>
        <end position="538"/>
    </location>
</feature>
<feature type="transmembrane region" description="Helical" evidence="1">
    <location>
        <begin position="46"/>
        <end position="66"/>
    </location>
</feature>
<feature type="transmembrane region" description="Helical" evidence="1">
    <location>
        <begin position="80"/>
        <end position="100"/>
    </location>
</feature>
<feature type="transmembrane region" description="Helical" evidence="1">
    <location>
        <begin position="105"/>
        <end position="125"/>
    </location>
</feature>
<feature type="transmembrane region" description="Helical" evidence="1">
    <location>
        <begin position="128"/>
        <end position="148"/>
    </location>
</feature>
<feature type="transmembrane region" description="Helical" evidence="1">
    <location>
        <begin position="170"/>
        <end position="190"/>
    </location>
</feature>
<feature type="transmembrane region" description="Helical" evidence="1">
    <location>
        <begin position="244"/>
        <end position="264"/>
    </location>
</feature>
<feature type="transmembrane region" description="Helical" evidence="1">
    <location>
        <begin position="305"/>
        <end position="325"/>
    </location>
</feature>
<feature type="transmembrane region" description="Helical" evidence="1">
    <location>
        <begin position="338"/>
        <end position="358"/>
    </location>
</feature>
<feature type="transmembrane region" description="Helical" evidence="1">
    <location>
        <begin position="366"/>
        <end position="386"/>
    </location>
</feature>
<feature type="transmembrane region" description="Helical" evidence="1">
    <location>
        <begin position="394"/>
        <end position="414"/>
    </location>
</feature>
<feature type="transmembrane region" description="Helical" evidence="1">
    <location>
        <begin position="435"/>
        <end position="455"/>
    </location>
</feature>
<feature type="transmembrane region" description="Helical" evidence="1">
    <location>
        <begin position="457"/>
        <end position="477"/>
    </location>
</feature>
<feature type="glycosylation site" description="N-linked (GlcNAc...) asparagine" evidence="1">
    <location>
        <position position="45"/>
    </location>
</feature>
<feature type="glycosylation site" description="N-linked (GlcNAc...) asparagine" evidence="1">
    <location>
        <position position="210"/>
    </location>
</feature>
<name>UN93L_DROME</name>
<gene>
    <name type="ORF">CG4928</name>
</gene>
<sequence length="538" mass="58683">MTGFTNAGFENDEPVKPKAGFEPDTASLREKVVLNPGEKWRILKNISIISIAFMVQFTAFQGTANLQSSINAKDGLGTVSLSAIYAALVVSCIFLPTLIIRKLTVKWTLVCSMLCYAPYIAFQLFPRFYTLVPAGILVGMGAAPMWASKATYLTQVGQVYAKITEQAVDAIIVRFFGFFFLAWQSAELWGNLISSLVLSSGAHGGGSSSNTTVSEEDLQFCGANFCTTGSGGHGNLERPPEDEIFEISMIYLSCIVAAVCIIAFFLDPLKRYGEKRKGSNSAAELSGLQLLSATFRQMKKPNLQLLIPITVFIGMEQAFIGADFTQAYVACALGVNKIGFVMICFGVVNALCSILFGSVMKYIGRTPIIVLGAVVHFTLITVELFWRPNPDNPIIFYAMSGLWGVGDAVWQTQINGLYGLLFRRNKEAAFSNYRLWESAGFVIAYAYATTLCTQMKLYILLAVLTLGCIGYVIVEILYRKKQRKLKKQEKLEAAEKEKEAAAAAAAAALAAAEAGADGVEETDDELDDLEEDIVVTRL</sequence>
<proteinExistence type="evidence at transcript level"/>
<keyword id="KW-0325">Glycoprotein</keyword>
<keyword id="KW-0472">Membrane</keyword>
<keyword id="KW-1185">Reference proteome</keyword>
<keyword id="KW-0812">Transmembrane</keyword>
<keyword id="KW-1133">Transmembrane helix</keyword>
<comment type="subcellular location">
    <subcellularLocation>
        <location evidence="2">Membrane</location>
        <topology evidence="2">Multi-pass membrane protein</topology>
    </subcellularLocation>
</comment>
<comment type="similarity">
    <text evidence="2">Belongs to the unc-93 family.</text>
</comment>
<protein>
    <recommendedName>
        <fullName>UNC93-like protein</fullName>
    </recommendedName>
</protein>
<evidence type="ECO:0000255" key="1"/>
<evidence type="ECO:0000305" key="2"/>